<gene>
    <name evidence="7" type="primary">NBPF11</name>
    <name evidence="7" type="synonym">NBPF24</name>
</gene>
<dbReference type="EMBL" id="AK302413">
    <property type="protein sequence ID" value="BAH13700.1"/>
    <property type="molecule type" value="mRNA"/>
</dbReference>
<dbReference type="EMBL" id="AL832622">
    <property type="protein sequence ID" value="CAD89962.1"/>
    <property type="status" value="ALT_FRAME"/>
    <property type="molecule type" value="mRNA"/>
</dbReference>
<dbReference type="EMBL" id="AL356004">
    <property type="protein sequence ID" value="CAI17086.2"/>
    <property type="status" value="ALT_SEQ"/>
    <property type="molecule type" value="Genomic_DNA"/>
</dbReference>
<dbReference type="EMBL" id="AL049742">
    <property type="protein sequence ID" value="CAI17086.2"/>
    <property type="status" value="JOINED"/>
    <property type="molecule type" value="Genomic_DNA"/>
</dbReference>
<dbReference type="EMBL" id="AL049742">
    <property type="protein sequence ID" value="CAI21822.2"/>
    <property type="status" value="ALT_SEQ"/>
    <property type="molecule type" value="Genomic_DNA"/>
</dbReference>
<dbReference type="EMBL" id="AL356004">
    <property type="protein sequence ID" value="CAI21822.2"/>
    <property type="status" value="JOINED"/>
    <property type="molecule type" value="Genomic_DNA"/>
</dbReference>
<dbReference type="EMBL" id="BX842679">
    <property type="status" value="NOT_ANNOTATED_CDS"/>
    <property type="molecule type" value="Genomic_DNA"/>
</dbReference>
<dbReference type="EMBL" id="BC136292">
    <property type="protein sequence ID" value="AAI36293.1"/>
    <property type="molecule type" value="mRNA"/>
</dbReference>
<dbReference type="CCDS" id="CCDS41381.2">
    <molecule id="Q86T75-1"/>
</dbReference>
<dbReference type="RefSeq" id="NP_001095133.3">
    <molecule id="Q86T75-1"/>
    <property type="nucleotide sequence ID" value="NM_001101663.5"/>
</dbReference>
<dbReference type="RefSeq" id="NP_001372397.2">
    <molecule id="Q86T75-1"/>
    <property type="nucleotide sequence ID" value="NM_001385468.3"/>
</dbReference>
<dbReference type="RefSeq" id="NP_001372398.2">
    <molecule id="Q86T75-1"/>
    <property type="nucleotide sequence ID" value="NM_001385469.3"/>
</dbReference>
<dbReference type="RefSeq" id="NP_001372399.2">
    <molecule id="Q86T75-1"/>
    <property type="nucleotide sequence ID" value="NM_001385470.3"/>
</dbReference>
<dbReference type="RefSeq" id="NP_001372400.1">
    <molecule id="Q86T75-1"/>
    <property type="nucleotide sequence ID" value="NM_001385471.1"/>
</dbReference>
<dbReference type="RefSeq" id="NP_001372401.1">
    <molecule id="Q86T75-1"/>
    <property type="nucleotide sequence ID" value="NM_001385472.1"/>
</dbReference>
<dbReference type="RefSeq" id="NP_001372402.1">
    <molecule id="Q86T75-1"/>
    <property type="nucleotide sequence ID" value="NM_001385473.1"/>
</dbReference>
<dbReference type="RefSeq" id="NP_001372403.1">
    <molecule id="Q86T75-1"/>
    <property type="nucleotide sequence ID" value="NM_001385474.1"/>
</dbReference>
<dbReference type="RefSeq" id="NP_001372404.1">
    <molecule id="Q86T75-1"/>
    <property type="nucleotide sequence ID" value="NM_001385475.1"/>
</dbReference>
<dbReference type="RefSeq" id="NP_001372405.1">
    <molecule id="Q86T75-1"/>
    <property type="nucleotide sequence ID" value="NM_001385476.1"/>
</dbReference>
<dbReference type="RefSeq" id="NP_899228.4">
    <molecule id="Q86T75-1"/>
    <property type="nucleotide sequence ID" value="NM_183372.5"/>
</dbReference>
<dbReference type="SMR" id="Q86T75"/>
<dbReference type="BioGRID" id="128294">
    <property type="interactions" value="4"/>
</dbReference>
<dbReference type="DIP" id="DIP-47328N"/>
<dbReference type="FunCoup" id="Q86T75">
    <property type="interactions" value="4"/>
</dbReference>
<dbReference type="IntAct" id="Q86T75">
    <property type="interactions" value="3"/>
</dbReference>
<dbReference type="MINT" id="Q86T75"/>
<dbReference type="STRING" id="9606.ENSP00000477509"/>
<dbReference type="GlyGen" id="Q86T75">
    <property type="glycosylation" value="1 site"/>
</dbReference>
<dbReference type="iPTMnet" id="Q86T75"/>
<dbReference type="PhosphoSitePlus" id="Q86T75"/>
<dbReference type="BioMuta" id="NBPF11"/>
<dbReference type="DMDM" id="325511389"/>
<dbReference type="jPOST" id="Q86T75"/>
<dbReference type="MassIVE" id="Q86T75"/>
<dbReference type="PaxDb" id="9606-ENSP00000477509"/>
<dbReference type="PeptideAtlas" id="Q86T75"/>
<dbReference type="Antibodypedia" id="74099">
    <property type="antibodies" value="18 antibodies from 8 providers"/>
</dbReference>
<dbReference type="DNASU" id="200030"/>
<dbReference type="Ensembl" id="ENST00000614015.4">
    <molecule id="Q86T75-1"/>
    <property type="protein sequence ID" value="ENSP00000484213.1"/>
    <property type="gene ID" value="ENSG00000263956.8"/>
</dbReference>
<dbReference type="Ensembl" id="ENST00000615281.4">
    <molecule id="Q86T75-1"/>
    <property type="protein sequence ID" value="ENSP00000477509.1"/>
    <property type="gene ID" value="ENSG00000263956.8"/>
</dbReference>
<dbReference type="Ensembl" id="ENST00000682118.1">
    <molecule id="Q86T75-1"/>
    <property type="protein sequence ID" value="ENSP00000507808.1"/>
    <property type="gene ID" value="ENSG00000263956.8"/>
</dbReference>
<dbReference type="GeneID" id="200030"/>
<dbReference type="KEGG" id="hsa:200030"/>
<dbReference type="MANE-Select" id="ENST00000682118.1">
    <property type="protein sequence ID" value="ENSP00000507808.1"/>
    <property type="RefSeq nucleotide sequence ID" value="NM_001385469.3"/>
    <property type="RefSeq protein sequence ID" value="NP_001372398.2"/>
</dbReference>
<dbReference type="UCSC" id="uc010ozx.3">
    <molecule id="Q86T75-1"/>
    <property type="organism name" value="human"/>
</dbReference>
<dbReference type="AGR" id="HGNC:31993"/>
<dbReference type="CTD" id="200030"/>
<dbReference type="GeneCards" id="NBPF11"/>
<dbReference type="HGNC" id="HGNC:31993">
    <property type="gene designation" value="NBPF11"/>
</dbReference>
<dbReference type="HPA" id="ENSG00000263956">
    <property type="expression patterns" value="Low tissue specificity"/>
</dbReference>
<dbReference type="MIM" id="614001">
    <property type="type" value="gene"/>
</dbReference>
<dbReference type="neXtProt" id="NX_Q86T75"/>
<dbReference type="OpenTargets" id="ENSG00000263956"/>
<dbReference type="VEuPathDB" id="HostDB:ENSG00000263956"/>
<dbReference type="eggNOG" id="ENOG502RU1I">
    <property type="taxonomic scope" value="Eukaryota"/>
</dbReference>
<dbReference type="GeneTree" id="ENSGT00420000029746"/>
<dbReference type="HOGENOM" id="CLU_004609_0_0_1"/>
<dbReference type="InParanoid" id="Q86T75"/>
<dbReference type="OrthoDB" id="9470178at2759"/>
<dbReference type="PAN-GO" id="Q86T75">
    <property type="GO annotations" value="0 GO annotations based on evolutionary models"/>
</dbReference>
<dbReference type="PhylomeDB" id="Q86T75"/>
<dbReference type="TreeFam" id="TF341151"/>
<dbReference type="PathwayCommons" id="Q86T75"/>
<dbReference type="SignaLink" id="Q86T75"/>
<dbReference type="BioGRID-ORCS" id="200030">
    <property type="hits" value="219 hits in 683 CRISPR screens"/>
</dbReference>
<dbReference type="ChiTaRS" id="NBPF11">
    <property type="organism name" value="human"/>
</dbReference>
<dbReference type="GenomeRNAi" id="200030"/>
<dbReference type="Pharos" id="Q86T75">
    <property type="development level" value="Tdark"/>
</dbReference>
<dbReference type="PRO" id="PR:Q86T75"/>
<dbReference type="Proteomes" id="UP000005640">
    <property type="component" value="Chromosome 1"/>
</dbReference>
<dbReference type="RNAct" id="Q86T75">
    <property type="molecule type" value="protein"/>
</dbReference>
<dbReference type="Bgee" id="ENSG00000263956">
    <property type="expression patterns" value="Expressed in granulocyte and 101 other cell types or tissues"/>
</dbReference>
<dbReference type="ExpressionAtlas" id="Q86T75">
    <property type="expression patterns" value="baseline and differential"/>
</dbReference>
<dbReference type="GO" id="GO:0005737">
    <property type="term" value="C:cytoplasm"/>
    <property type="evidence" value="ECO:0007669"/>
    <property type="project" value="UniProtKB-SubCell"/>
</dbReference>
<dbReference type="InterPro" id="IPR055306">
    <property type="entry name" value="NBPF"/>
</dbReference>
<dbReference type="InterPro" id="IPR010630">
    <property type="entry name" value="Olduvai_dom"/>
</dbReference>
<dbReference type="PANTHER" id="PTHR14199:SF35">
    <property type="entry name" value="NEUROBLASTOMA BREAKPOINT FAMILY MEMBER 1-RELATED"/>
    <property type="match status" value="1"/>
</dbReference>
<dbReference type="PANTHER" id="PTHR14199">
    <property type="entry name" value="NEUROBLASTOMA BREAKPOINT FAMILY MEMBER 6-LIKE PROTEIN"/>
    <property type="match status" value="1"/>
</dbReference>
<dbReference type="Pfam" id="PF06758">
    <property type="entry name" value="Olduvai"/>
    <property type="match status" value="6"/>
</dbReference>
<dbReference type="SMART" id="SM01148">
    <property type="entry name" value="DUF1220"/>
    <property type="match status" value="6"/>
</dbReference>
<dbReference type="PROSITE" id="PS51316">
    <property type="entry name" value="ODV"/>
    <property type="match status" value="6"/>
</dbReference>
<proteinExistence type="evidence at transcript level"/>
<feature type="chain" id="PRO_0000288046" description="NBPF family member NBPF11">
    <location>
        <begin position="1"/>
        <end position="865"/>
    </location>
</feature>
<feature type="domain" description="Olduvai 1" evidence="2">
    <location>
        <begin position="165"/>
        <end position="259"/>
    </location>
</feature>
<feature type="domain" description="Olduvai 2" evidence="2">
    <location>
        <begin position="436"/>
        <end position="528"/>
    </location>
</feature>
<feature type="domain" description="Olduvai 3" evidence="2">
    <location>
        <begin position="529"/>
        <end position="617"/>
    </location>
</feature>
<feature type="domain" description="Olduvai 4" evidence="2">
    <location>
        <begin position="620"/>
        <end position="675"/>
    </location>
</feature>
<feature type="domain" description="Olduvai 5" evidence="2">
    <location>
        <begin position="676"/>
        <end position="767"/>
    </location>
</feature>
<feature type="domain" description="Olduvai 6" evidence="2">
    <location>
        <begin position="770"/>
        <end position="865"/>
    </location>
</feature>
<feature type="region of interest" description="Disordered" evidence="3">
    <location>
        <begin position="161"/>
        <end position="200"/>
    </location>
</feature>
<feature type="region of interest" description="Disordered" evidence="3">
    <location>
        <begin position="450"/>
        <end position="475"/>
    </location>
</feature>
<feature type="region of interest" description="Disordered" evidence="3">
    <location>
        <begin position="520"/>
        <end position="567"/>
    </location>
</feature>
<feature type="region of interest" description="Disordered" evidence="3">
    <location>
        <begin position="829"/>
        <end position="865"/>
    </location>
</feature>
<feature type="coiled-coil region" evidence="1">
    <location>
        <begin position="70"/>
        <end position="130"/>
    </location>
</feature>
<feature type="coiled-coil region" evidence="1">
    <location>
        <begin position="339"/>
        <end position="401"/>
    </location>
</feature>
<feature type="compositionally biased region" description="Acidic residues" evidence="3">
    <location>
        <begin position="165"/>
        <end position="181"/>
    </location>
</feature>
<feature type="compositionally biased region" description="Basic and acidic residues" evidence="3">
    <location>
        <begin position="190"/>
        <end position="200"/>
    </location>
</feature>
<feature type="compositionally biased region" description="Acidic residues" evidence="3">
    <location>
        <begin position="530"/>
        <end position="539"/>
    </location>
</feature>
<feature type="compositionally biased region" description="Acidic residues" evidence="3">
    <location>
        <begin position="550"/>
        <end position="562"/>
    </location>
</feature>
<feature type="compositionally biased region" description="Basic and acidic residues" evidence="3">
    <location>
        <begin position="833"/>
        <end position="850"/>
    </location>
</feature>
<feature type="splice variant" id="VSP_040663" description="In isoform 2." evidence="5">
    <original>LASYQSYSSTFHSLEEQQVCMAVD</original>
    <variation>TSVGSSEKGGPRGNRSQAQQGAAG</variation>
    <location>
        <begin position="575"/>
        <end position="598"/>
    </location>
</feature>
<feature type="splice variant" id="VSP_040664" description="In isoform 2." evidence="5">
    <location>
        <begin position="599"/>
        <end position="865"/>
    </location>
</feature>
<name>NBPFB_HUMAN</name>
<sequence length="865" mass="99433">MVVSAGPWSSEKAEMNILEINEKLRPQLAENKQQFRNLKERCFLTQLAGFLANRQKKYKYEECKDLIKFMLRNERQFKEEKLAEQLKQAEELRQYKVLVHSQERELTQLREKLREGRDASRSLNEHLQALLTPDEPDKSQGQDLQEQLAEGCRLAQHLVQKLSPENDEDEDEDVQVEEDEKVLESSAPREVQKAEESKVPEDSLEECAITCSNSHGPCDSIQPHKNIKITFEEDKVNSSLVVDRESSHDGCQDALNILPVPGPTSSATNVSMVVSAGPLSSEKAEMNILEINEKLCPQLAEKKQQFRSLKEKCFVTQVACFLAKQQNKYKYEECKDLIKSMLRNERQFKEEKLAEQLKQAEELRQYKVLVHSQERELTQLREKLREGRDASRSLNEHLQALLTPDEPDKSQGQDLQEQLAEGCRLAQHLVQKLSPENDNDDDEDVQVEVAEKVQKSSSPREMQKAEEKEVPEDSLEECAITCSNSHGPYDSNQPHRKTKITFEEDKVDSTLIGSSSHVEWEDAVHIIPENESDDEEEEEKGPVSPRNLQESEEEEVPQESWDEGYSTLSIPPERLASYQSYSSTFHSLEEQQVCMAVDIGRHRWDQVKKEDQEATGPRLSRELLDEKEPEVLQDSLDRCYSTPSVYLGLTDSCQPYRSAFYVLEQQRIGLAVDMDEIEKYQEVEEDQDPSCPRLSRELLAEKEPEVLQDSLDRCYSTPSGYLELPDLGQPYRSAVYSLEEQYLGLALDVDRIKKDQEEEEDQGPPCPRLSRELLEVVEPEVLQDSLDVIQLLPVVLNSLTPASPTEVPFMHWRKNMLAFLLTWEKLKRRGRGRKEGEEDQRRKEEGEEKKGKKIKTHHAPGSAAC</sequence>
<organism>
    <name type="scientific">Homo sapiens</name>
    <name type="common">Human</name>
    <dbReference type="NCBI Taxonomy" id="9606"/>
    <lineage>
        <taxon>Eukaryota</taxon>
        <taxon>Metazoa</taxon>
        <taxon>Chordata</taxon>
        <taxon>Craniata</taxon>
        <taxon>Vertebrata</taxon>
        <taxon>Euteleostomi</taxon>
        <taxon>Mammalia</taxon>
        <taxon>Eutheria</taxon>
        <taxon>Euarchontoglires</taxon>
        <taxon>Primates</taxon>
        <taxon>Haplorrhini</taxon>
        <taxon>Catarrhini</taxon>
        <taxon>Hominidae</taxon>
        <taxon>Homo</taxon>
    </lineage>
</organism>
<reference key="1">
    <citation type="journal article" date="2004" name="Nat. Genet.">
        <title>Complete sequencing and characterization of 21,243 full-length human cDNAs.</title>
        <authorList>
            <person name="Ota T."/>
            <person name="Suzuki Y."/>
            <person name="Nishikawa T."/>
            <person name="Otsuki T."/>
            <person name="Sugiyama T."/>
            <person name="Irie R."/>
            <person name="Wakamatsu A."/>
            <person name="Hayashi K."/>
            <person name="Sato H."/>
            <person name="Nagai K."/>
            <person name="Kimura K."/>
            <person name="Makita H."/>
            <person name="Sekine M."/>
            <person name="Obayashi M."/>
            <person name="Nishi T."/>
            <person name="Shibahara T."/>
            <person name="Tanaka T."/>
            <person name="Ishii S."/>
            <person name="Yamamoto J."/>
            <person name="Saito K."/>
            <person name="Kawai Y."/>
            <person name="Isono Y."/>
            <person name="Nakamura Y."/>
            <person name="Nagahari K."/>
            <person name="Murakami K."/>
            <person name="Yasuda T."/>
            <person name="Iwayanagi T."/>
            <person name="Wagatsuma M."/>
            <person name="Shiratori A."/>
            <person name="Sudo H."/>
            <person name="Hosoiri T."/>
            <person name="Kaku Y."/>
            <person name="Kodaira H."/>
            <person name="Kondo H."/>
            <person name="Sugawara M."/>
            <person name="Takahashi M."/>
            <person name="Kanda K."/>
            <person name="Yokoi T."/>
            <person name="Furuya T."/>
            <person name="Kikkawa E."/>
            <person name="Omura Y."/>
            <person name="Abe K."/>
            <person name="Kamihara K."/>
            <person name="Katsuta N."/>
            <person name="Sato K."/>
            <person name="Tanikawa M."/>
            <person name="Yamazaki M."/>
            <person name="Ninomiya K."/>
            <person name="Ishibashi T."/>
            <person name="Yamashita H."/>
            <person name="Murakawa K."/>
            <person name="Fujimori K."/>
            <person name="Tanai H."/>
            <person name="Kimata M."/>
            <person name="Watanabe M."/>
            <person name="Hiraoka S."/>
            <person name="Chiba Y."/>
            <person name="Ishida S."/>
            <person name="Ono Y."/>
            <person name="Takiguchi S."/>
            <person name="Watanabe S."/>
            <person name="Yosida M."/>
            <person name="Hotuta T."/>
            <person name="Kusano J."/>
            <person name="Kanehori K."/>
            <person name="Takahashi-Fujii A."/>
            <person name="Hara H."/>
            <person name="Tanase T.-O."/>
            <person name="Nomura Y."/>
            <person name="Togiya S."/>
            <person name="Komai F."/>
            <person name="Hara R."/>
            <person name="Takeuchi K."/>
            <person name="Arita M."/>
            <person name="Imose N."/>
            <person name="Musashino K."/>
            <person name="Yuuki H."/>
            <person name="Oshima A."/>
            <person name="Sasaki N."/>
            <person name="Aotsuka S."/>
            <person name="Yoshikawa Y."/>
            <person name="Matsunawa H."/>
            <person name="Ichihara T."/>
            <person name="Shiohata N."/>
            <person name="Sano S."/>
            <person name="Moriya S."/>
            <person name="Momiyama H."/>
            <person name="Satoh N."/>
            <person name="Takami S."/>
            <person name="Terashima Y."/>
            <person name="Suzuki O."/>
            <person name="Nakagawa S."/>
            <person name="Senoh A."/>
            <person name="Mizoguchi H."/>
            <person name="Goto Y."/>
            <person name="Shimizu F."/>
            <person name="Wakebe H."/>
            <person name="Hishigaki H."/>
            <person name="Watanabe T."/>
            <person name="Sugiyama A."/>
            <person name="Takemoto M."/>
            <person name="Kawakami B."/>
            <person name="Yamazaki M."/>
            <person name="Watanabe K."/>
            <person name="Kumagai A."/>
            <person name="Itakura S."/>
            <person name="Fukuzumi Y."/>
            <person name="Fujimori Y."/>
            <person name="Komiyama M."/>
            <person name="Tashiro H."/>
            <person name="Tanigami A."/>
            <person name="Fujiwara T."/>
            <person name="Ono T."/>
            <person name="Yamada K."/>
            <person name="Fujii Y."/>
            <person name="Ozaki K."/>
            <person name="Hirao M."/>
            <person name="Ohmori Y."/>
            <person name="Kawabata A."/>
            <person name="Hikiji T."/>
            <person name="Kobatake N."/>
            <person name="Inagaki H."/>
            <person name="Ikema Y."/>
            <person name="Okamoto S."/>
            <person name="Okitani R."/>
            <person name="Kawakami T."/>
            <person name="Noguchi S."/>
            <person name="Itoh T."/>
            <person name="Shigeta K."/>
            <person name="Senba T."/>
            <person name="Matsumura K."/>
            <person name="Nakajima Y."/>
            <person name="Mizuno T."/>
            <person name="Morinaga M."/>
            <person name="Sasaki M."/>
            <person name="Togashi T."/>
            <person name="Oyama M."/>
            <person name="Hata H."/>
            <person name="Watanabe M."/>
            <person name="Komatsu T."/>
            <person name="Mizushima-Sugano J."/>
            <person name="Satoh T."/>
            <person name="Shirai Y."/>
            <person name="Takahashi Y."/>
            <person name="Nakagawa K."/>
            <person name="Okumura K."/>
            <person name="Nagase T."/>
            <person name="Nomura N."/>
            <person name="Kikuchi H."/>
            <person name="Masuho Y."/>
            <person name="Yamashita R."/>
            <person name="Nakai K."/>
            <person name="Yada T."/>
            <person name="Nakamura Y."/>
            <person name="Ohara O."/>
            <person name="Isogai T."/>
            <person name="Sugano S."/>
        </authorList>
    </citation>
    <scope>NUCLEOTIDE SEQUENCE [LARGE SCALE MRNA] (ISOFORM 1)</scope>
    <source>
        <tissue>Testis</tissue>
    </source>
</reference>
<reference key="2">
    <citation type="journal article" date="2007" name="BMC Genomics">
        <title>The full-ORF clone resource of the German cDNA consortium.</title>
        <authorList>
            <person name="Bechtel S."/>
            <person name="Rosenfelder H."/>
            <person name="Duda A."/>
            <person name="Schmidt C.P."/>
            <person name="Ernst U."/>
            <person name="Wellenreuther R."/>
            <person name="Mehrle A."/>
            <person name="Schuster C."/>
            <person name="Bahr A."/>
            <person name="Bloecker H."/>
            <person name="Heubner D."/>
            <person name="Hoerlein A."/>
            <person name="Michel G."/>
            <person name="Wedler H."/>
            <person name="Koehrer K."/>
            <person name="Ottenwaelder B."/>
            <person name="Poustka A."/>
            <person name="Wiemann S."/>
            <person name="Schupp I."/>
        </authorList>
    </citation>
    <scope>NUCLEOTIDE SEQUENCE [LARGE SCALE MRNA] (ISOFORM 2)</scope>
    <source>
        <tissue>Spinal cord</tissue>
    </source>
</reference>
<reference key="3">
    <citation type="journal article" date="2006" name="Nature">
        <title>The DNA sequence and biological annotation of human chromosome 1.</title>
        <authorList>
            <person name="Gregory S.G."/>
            <person name="Barlow K.F."/>
            <person name="McLay K.E."/>
            <person name="Kaul R."/>
            <person name="Swarbreck D."/>
            <person name="Dunham A."/>
            <person name="Scott C.E."/>
            <person name="Howe K.L."/>
            <person name="Woodfine K."/>
            <person name="Spencer C.C.A."/>
            <person name="Jones M.C."/>
            <person name="Gillson C."/>
            <person name="Searle S."/>
            <person name="Zhou Y."/>
            <person name="Kokocinski F."/>
            <person name="McDonald L."/>
            <person name="Evans R."/>
            <person name="Phillips K."/>
            <person name="Atkinson A."/>
            <person name="Cooper R."/>
            <person name="Jones C."/>
            <person name="Hall R.E."/>
            <person name="Andrews T.D."/>
            <person name="Lloyd C."/>
            <person name="Ainscough R."/>
            <person name="Almeida J.P."/>
            <person name="Ambrose K.D."/>
            <person name="Anderson F."/>
            <person name="Andrew R.W."/>
            <person name="Ashwell R.I.S."/>
            <person name="Aubin K."/>
            <person name="Babbage A.K."/>
            <person name="Bagguley C.L."/>
            <person name="Bailey J."/>
            <person name="Beasley H."/>
            <person name="Bethel G."/>
            <person name="Bird C.P."/>
            <person name="Bray-Allen S."/>
            <person name="Brown J.Y."/>
            <person name="Brown A.J."/>
            <person name="Buckley D."/>
            <person name="Burton J."/>
            <person name="Bye J."/>
            <person name="Carder C."/>
            <person name="Chapman J.C."/>
            <person name="Clark S.Y."/>
            <person name="Clarke G."/>
            <person name="Clee C."/>
            <person name="Cobley V."/>
            <person name="Collier R.E."/>
            <person name="Corby N."/>
            <person name="Coville G.J."/>
            <person name="Davies J."/>
            <person name="Deadman R."/>
            <person name="Dunn M."/>
            <person name="Earthrowl M."/>
            <person name="Ellington A.G."/>
            <person name="Errington H."/>
            <person name="Frankish A."/>
            <person name="Frankland J."/>
            <person name="French L."/>
            <person name="Garner P."/>
            <person name="Garnett J."/>
            <person name="Gay L."/>
            <person name="Ghori M.R.J."/>
            <person name="Gibson R."/>
            <person name="Gilby L.M."/>
            <person name="Gillett W."/>
            <person name="Glithero R.J."/>
            <person name="Grafham D.V."/>
            <person name="Griffiths C."/>
            <person name="Griffiths-Jones S."/>
            <person name="Grocock R."/>
            <person name="Hammond S."/>
            <person name="Harrison E.S.I."/>
            <person name="Hart E."/>
            <person name="Haugen E."/>
            <person name="Heath P.D."/>
            <person name="Holmes S."/>
            <person name="Holt K."/>
            <person name="Howden P.J."/>
            <person name="Hunt A.R."/>
            <person name="Hunt S.E."/>
            <person name="Hunter G."/>
            <person name="Isherwood J."/>
            <person name="James R."/>
            <person name="Johnson C."/>
            <person name="Johnson D."/>
            <person name="Joy A."/>
            <person name="Kay M."/>
            <person name="Kershaw J.K."/>
            <person name="Kibukawa M."/>
            <person name="Kimberley A.M."/>
            <person name="King A."/>
            <person name="Knights A.J."/>
            <person name="Lad H."/>
            <person name="Laird G."/>
            <person name="Lawlor S."/>
            <person name="Leongamornlert D.A."/>
            <person name="Lloyd D.M."/>
            <person name="Loveland J."/>
            <person name="Lovell J."/>
            <person name="Lush M.J."/>
            <person name="Lyne R."/>
            <person name="Martin S."/>
            <person name="Mashreghi-Mohammadi M."/>
            <person name="Matthews L."/>
            <person name="Matthews N.S.W."/>
            <person name="McLaren S."/>
            <person name="Milne S."/>
            <person name="Mistry S."/>
            <person name="Moore M.J.F."/>
            <person name="Nickerson T."/>
            <person name="O'Dell C.N."/>
            <person name="Oliver K."/>
            <person name="Palmeiri A."/>
            <person name="Palmer S.A."/>
            <person name="Parker A."/>
            <person name="Patel D."/>
            <person name="Pearce A.V."/>
            <person name="Peck A.I."/>
            <person name="Pelan S."/>
            <person name="Phelps K."/>
            <person name="Phillimore B.J."/>
            <person name="Plumb R."/>
            <person name="Rajan J."/>
            <person name="Raymond C."/>
            <person name="Rouse G."/>
            <person name="Saenphimmachak C."/>
            <person name="Sehra H.K."/>
            <person name="Sheridan E."/>
            <person name="Shownkeen R."/>
            <person name="Sims S."/>
            <person name="Skuce C.D."/>
            <person name="Smith M."/>
            <person name="Steward C."/>
            <person name="Subramanian S."/>
            <person name="Sycamore N."/>
            <person name="Tracey A."/>
            <person name="Tromans A."/>
            <person name="Van Helmond Z."/>
            <person name="Wall M."/>
            <person name="Wallis J.M."/>
            <person name="White S."/>
            <person name="Whitehead S.L."/>
            <person name="Wilkinson J.E."/>
            <person name="Willey D.L."/>
            <person name="Williams H."/>
            <person name="Wilming L."/>
            <person name="Wray P.W."/>
            <person name="Wu Z."/>
            <person name="Coulson A."/>
            <person name="Vaudin M."/>
            <person name="Sulston J.E."/>
            <person name="Durbin R.M."/>
            <person name="Hubbard T."/>
            <person name="Wooster R."/>
            <person name="Dunham I."/>
            <person name="Carter N.P."/>
            <person name="McVean G."/>
            <person name="Ross M.T."/>
            <person name="Harrow J."/>
            <person name="Olson M.V."/>
            <person name="Beck S."/>
            <person name="Rogers J."/>
            <person name="Bentley D.R."/>
        </authorList>
    </citation>
    <scope>NUCLEOTIDE SEQUENCE [LARGE SCALE GENOMIC DNA]</scope>
</reference>
<reference key="4">
    <citation type="journal article" date="2004" name="Genome Res.">
        <title>The status, quality, and expansion of the NIH full-length cDNA project: the Mammalian Gene Collection (MGC).</title>
        <authorList>
            <consortium name="The MGC Project Team"/>
        </authorList>
    </citation>
    <scope>NUCLEOTIDE SEQUENCE [LARGE SCALE MRNA] (ISOFORM 1)</scope>
    <source>
        <tissue>Brain</tissue>
    </source>
</reference>
<reference key="5">
    <citation type="journal article" date="2005" name="Mol. Biol. Evol.">
        <title>A novel gene family NBPF: intricate structure generated by gene duplications during primate evolution.</title>
        <authorList>
            <person name="Vandepoele K."/>
            <person name="Van Roy N."/>
            <person name="Staes K."/>
            <person name="Speleman F."/>
            <person name="van Roy F."/>
        </authorList>
    </citation>
    <scope>TISSUE SPECIFICITY</scope>
</reference>
<protein>
    <recommendedName>
        <fullName evidence="6">NBPF family member NBPF11</fullName>
    </recommendedName>
    <alternativeName>
        <fullName evidence="6">Neuroblastoma breakpoint family member 11</fullName>
    </alternativeName>
    <alternativeName>
        <fullName evidence="7">Neuroblastoma breakpoint family member 24</fullName>
    </alternativeName>
</protein>
<comment type="subcellular location">
    <subcellularLocation>
        <location evidence="6">Cytoplasm</location>
    </subcellularLocation>
</comment>
<comment type="alternative products">
    <event type="alternative splicing"/>
    <isoform>
        <id>Q86T75-1</id>
        <name>1</name>
        <sequence type="displayed"/>
    </isoform>
    <isoform>
        <id>Q86T75-2</id>
        <name>2</name>
        <sequence type="described" ref="VSP_040663 VSP_040664"/>
    </isoform>
</comment>
<comment type="tissue specificity">
    <text evidence="4">Expressed in spinal cord.</text>
</comment>
<comment type="miscellaneous">
    <text>Encoded by one of the numerous copies of NBPF genes clustered in the p36, p12 and q21 region of the chromosome 1.</text>
</comment>
<comment type="similarity">
    <text evidence="6">Belongs to the NBPF family.</text>
</comment>
<comment type="sequence caution" evidence="6">
    <conflict type="frameshift">
        <sequence resource="EMBL-CDS" id="CAD89962"/>
    </conflict>
</comment>
<comment type="sequence caution" evidence="6">
    <conflict type="erroneous gene model prediction">
        <sequence resource="EMBL-CDS" id="CAI17086"/>
    </conflict>
</comment>
<comment type="sequence caution" evidence="6">
    <conflict type="erroneous gene model prediction">
        <sequence resource="EMBL-CDS" id="CAI21822"/>
    </conflict>
</comment>
<evidence type="ECO:0000255" key="1"/>
<evidence type="ECO:0000255" key="2">
    <source>
        <dbReference type="PROSITE-ProRule" id="PRU00647"/>
    </source>
</evidence>
<evidence type="ECO:0000256" key="3">
    <source>
        <dbReference type="SAM" id="MobiDB-lite"/>
    </source>
</evidence>
<evidence type="ECO:0000269" key="4">
    <source>
    </source>
</evidence>
<evidence type="ECO:0000303" key="5">
    <source>
    </source>
</evidence>
<evidence type="ECO:0000305" key="6"/>
<evidence type="ECO:0000312" key="7">
    <source>
        <dbReference type="HGNC" id="HGNC:31993"/>
    </source>
</evidence>
<accession>Q86T75</accession>
<accession>B1AKG1</accession>
<accession>B7Z7R4</accession>
<accession>Q5RGN0</accession>
<keyword id="KW-0025">Alternative splicing</keyword>
<keyword id="KW-0175">Coiled coil</keyword>
<keyword id="KW-0963">Cytoplasm</keyword>
<keyword id="KW-1185">Reference proteome</keyword>
<keyword id="KW-0677">Repeat</keyword>